<protein>
    <recommendedName>
        <fullName evidence="1">Probable 2-(5''-triphosphoribosyl)-3'-dephosphocoenzyme-A synthase</fullName>
        <shortName evidence="1">2-(5''-triphosphoribosyl)-3'-dephospho-CoA synthase</shortName>
        <ecNumber evidence="1">2.4.2.52</ecNumber>
    </recommendedName>
</protein>
<comment type="catalytic activity">
    <reaction evidence="1">
        <text>3'-dephospho-CoA + ATP = 2'-(5''-triphospho-alpha-D-ribosyl)-3'-dephospho-CoA + adenine</text>
        <dbReference type="Rhea" id="RHEA:15117"/>
        <dbReference type="ChEBI" id="CHEBI:16708"/>
        <dbReference type="ChEBI" id="CHEBI:30616"/>
        <dbReference type="ChEBI" id="CHEBI:57328"/>
        <dbReference type="ChEBI" id="CHEBI:61378"/>
        <dbReference type="EC" id="2.4.2.52"/>
    </reaction>
</comment>
<comment type="similarity">
    <text evidence="1">Belongs to the CitG/MdcB family.</text>
</comment>
<proteinExistence type="inferred from homology"/>
<evidence type="ECO:0000255" key="1">
    <source>
        <dbReference type="HAMAP-Rule" id="MF_00397"/>
    </source>
</evidence>
<sequence length="294" mass="32788">MTKAVLTSISQLALKALLYEVSLSPKPGLVDRFDNGAHDDMSFMTFIDSMIALSPFFQAYIETGFAYAKEEPLLLFNRLRQLGQKAEETMFCATQGINTHKGLNFSMALLLGATGAYLARTPHLMTDLGRFSKEDTLAICRLVKPMTAHLIQTDLGHLNTKKEFTYGEQLFVTYGIKGPRGEASEGFTTLTDHALPYFRQMISQNDPETSQLRLLVYLMSIVEDGNLIHRGGIEAWKGVKADMRLLLQQDLSTTDLRLALSSYNQCLINQHLSPGGAADLLALTFYFAFLEKLL</sequence>
<feature type="chain" id="PRO_0000214678" description="Probable 2-(5''-triphosphoribosyl)-3'-dephosphocoenzyme-A synthase">
    <location>
        <begin position="1"/>
        <end position="294"/>
    </location>
</feature>
<dbReference type="EC" id="2.4.2.52" evidence="1"/>
<dbReference type="EMBL" id="AE014074">
    <property type="protein sequence ID" value="AAM79433.1"/>
    <property type="molecule type" value="Genomic_DNA"/>
</dbReference>
<dbReference type="RefSeq" id="WP_011054506.1">
    <property type="nucleotide sequence ID" value="NC_004070.1"/>
</dbReference>
<dbReference type="KEGG" id="spg:SpyM3_0826"/>
<dbReference type="HOGENOM" id="CLU_056179_1_0_9"/>
<dbReference type="Proteomes" id="UP000000564">
    <property type="component" value="Chromosome"/>
</dbReference>
<dbReference type="GO" id="GO:0005524">
    <property type="term" value="F:ATP binding"/>
    <property type="evidence" value="ECO:0007669"/>
    <property type="project" value="UniProtKB-KW"/>
</dbReference>
<dbReference type="GO" id="GO:0046917">
    <property type="term" value="F:triphosphoribosyl-dephospho-CoA synthase activity"/>
    <property type="evidence" value="ECO:0007669"/>
    <property type="project" value="UniProtKB-UniRule"/>
</dbReference>
<dbReference type="GO" id="GO:0051191">
    <property type="term" value="P:prosthetic group biosynthetic process"/>
    <property type="evidence" value="ECO:0007669"/>
    <property type="project" value="TreeGrafter"/>
</dbReference>
<dbReference type="Gene3D" id="1.10.4200.10">
    <property type="entry name" value="Triphosphoribosyl-dephospho-CoA protein"/>
    <property type="match status" value="1"/>
</dbReference>
<dbReference type="HAMAP" id="MF_00397">
    <property type="entry name" value="CitG"/>
    <property type="match status" value="1"/>
</dbReference>
<dbReference type="InterPro" id="IPR002736">
    <property type="entry name" value="CitG"/>
</dbReference>
<dbReference type="InterPro" id="IPR017551">
    <property type="entry name" value="TriPribosyl-deP-CoA_syn_CitG"/>
</dbReference>
<dbReference type="NCBIfam" id="TIGR03125">
    <property type="entry name" value="citrate_citG"/>
    <property type="match status" value="1"/>
</dbReference>
<dbReference type="PANTHER" id="PTHR30201:SF2">
    <property type="entry name" value="2-(5''-TRIPHOSPHORIBOSYL)-3'-DEPHOSPHOCOENZYME-A SYNTHASE"/>
    <property type="match status" value="1"/>
</dbReference>
<dbReference type="PANTHER" id="PTHR30201">
    <property type="entry name" value="TRIPHOSPHORIBOSYL-DEPHOSPHO-COA SYNTHASE"/>
    <property type="match status" value="1"/>
</dbReference>
<dbReference type="Pfam" id="PF01874">
    <property type="entry name" value="CitG"/>
    <property type="match status" value="1"/>
</dbReference>
<gene>
    <name evidence="1" type="primary">citG</name>
    <name type="ordered locus">SpyM3_0826</name>
</gene>
<name>CITG_STRP3</name>
<organism>
    <name type="scientific">Streptococcus pyogenes serotype M3 (strain ATCC BAA-595 / MGAS315)</name>
    <dbReference type="NCBI Taxonomy" id="198466"/>
    <lineage>
        <taxon>Bacteria</taxon>
        <taxon>Bacillati</taxon>
        <taxon>Bacillota</taxon>
        <taxon>Bacilli</taxon>
        <taxon>Lactobacillales</taxon>
        <taxon>Streptococcaceae</taxon>
        <taxon>Streptococcus</taxon>
    </lineage>
</organism>
<reference key="1">
    <citation type="journal article" date="2002" name="Proc. Natl. Acad. Sci. U.S.A.">
        <title>Genome sequence of a serotype M3 strain of group A Streptococcus: phage-encoded toxins, the high-virulence phenotype, and clone emergence.</title>
        <authorList>
            <person name="Beres S.B."/>
            <person name="Sylva G.L."/>
            <person name="Barbian K.D."/>
            <person name="Lei B."/>
            <person name="Hoff J.S."/>
            <person name="Mammarella N.D."/>
            <person name="Liu M.-Y."/>
            <person name="Smoot J.C."/>
            <person name="Porcella S.F."/>
            <person name="Parkins L.D."/>
            <person name="Campbell D.S."/>
            <person name="Smith T.M."/>
            <person name="McCormick J.K."/>
            <person name="Leung D.Y.M."/>
            <person name="Schlievert P.M."/>
            <person name="Musser J.M."/>
        </authorList>
    </citation>
    <scope>NUCLEOTIDE SEQUENCE [LARGE SCALE GENOMIC DNA]</scope>
    <source>
        <strain>ATCC BAA-595 / MGAS315</strain>
    </source>
</reference>
<accession>P0DA30</accession>
<accession>Q8K7F9</accession>
<keyword id="KW-0067">ATP-binding</keyword>
<keyword id="KW-0547">Nucleotide-binding</keyword>
<keyword id="KW-0808">Transferase</keyword>